<sequence>METANLVAIFVSCLLVSLTGYALYTSFGRPSEGLIDPFDNHED</sequence>
<keyword id="KW-0150">Chloroplast</keyword>
<keyword id="KW-0472">Membrane</keyword>
<keyword id="KW-0934">Plastid</keyword>
<keyword id="KW-0793">Thylakoid</keyword>
<keyword id="KW-0812">Transmembrane</keyword>
<keyword id="KW-1133">Transmembrane helix</keyword>
<reference key="1">
    <citation type="journal article" date="2003" name="Mol. Phylogenet. Evol.">
        <title>Inference of higher-order relationships in the cycads from a large chloroplast data set.</title>
        <authorList>
            <person name="Rai H.S."/>
            <person name="O'Brien H.E."/>
            <person name="Reeves P.A."/>
            <person name="Olmstead R.G."/>
            <person name="Graham S.W."/>
        </authorList>
    </citation>
    <scope>NUCLEOTIDE SEQUENCE [GENOMIC DNA]</scope>
</reference>
<gene>
    <name evidence="1" type="primary">psbN</name>
</gene>
<geneLocation type="chloroplast"/>
<protein>
    <recommendedName>
        <fullName evidence="1">Protein PsbN</fullName>
    </recommendedName>
</protein>
<proteinExistence type="inferred from homology"/>
<accession>Q8HS39</accession>
<organism>
    <name type="scientific">Ephedra sinica</name>
    <name type="common">Chinese ephedra</name>
    <name type="synonym">Ma huang</name>
    <dbReference type="NCBI Taxonomy" id="33152"/>
    <lineage>
        <taxon>Eukaryota</taxon>
        <taxon>Viridiplantae</taxon>
        <taxon>Streptophyta</taxon>
        <taxon>Embryophyta</taxon>
        <taxon>Tracheophyta</taxon>
        <taxon>Spermatophyta</taxon>
        <taxon>Gnetopsida</taxon>
        <taxon>Gnetidae</taxon>
        <taxon>Ephedrales</taxon>
        <taxon>Ephedraceae</taxon>
        <taxon>Ephedra</taxon>
    </lineage>
</organism>
<comment type="function">
    <text evidence="1">May play a role in photosystem I and II biogenesis.</text>
</comment>
<comment type="subcellular location">
    <subcellularLocation>
        <location evidence="1">Plastid</location>
        <location evidence="1">Chloroplast thylakoid membrane</location>
        <topology evidence="1">Single-pass membrane protein</topology>
    </subcellularLocation>
</comment>
<comment type="similarity">
    <text evidence="1">Belongs to the PsbN family.</text>
</comment>
<comment type="caution">
    <text evidence="1">Originally thought to be a component of PSII; based on experiments in Synechocystis, N.tabacum and barley, and its absence from PSII in T.elongatus and T.vulcanus, this is probably not true.</text>
</comment>
<evidence type="ECO:0000255" key="1">
    <source>
        <dbReference type="HAMAP-Rule" id="MF_00293"/>
    </source>
</evidence>
<feature type="chain" id="PRO_0000207897" description="Protein PsbN">
    <location>
        <begin position="1"/>
        <end position="43"/>
    </location>
</feature>
<feature type="transmembrane region" description="Helical" evidence="1">
    <location>
        <begin position="5"/>
        <end position="27"/>
    </location>
</feature>
<dbReference type="EMBL" id="AY007462">
    <property type="protein sequence ID" value="AAG12361.1"/>
    <property type="molecule type" value="Genomic_DNA"/>
</dbReference>
<dbReference type="RefSeq" id="YP_009694813.1">
    <property type="nucleotide sequence ID" value="NC_044773.1"/>
</dbReference>
<dbReference type="GeneID" id="41825935"/>
<dbReference type="GO" id="GO:0009535">
    <property type="term" value="C:chloroplast thylakoid membrane"/>
    <property type="evidence" value="ECO:0007669"/>
    <property type="project" value="UniProtKB-SubCell"/>
</dbReference>
<dbReference type="GO" id="GO:0015979">
    <property type="term" value="P:photosynthesis"/>
    <property type="evidence" value="ECO:0007669"/>
    <property type="project" value="InterPro"/>
</dbReference>
<dbReference type="HAMAP" id="MF_00293">
    <property type="entry name" value="PSII_PsbN"/>
    <property type="match status" value="1"/>
</dbReference>
<dbReference type="InterPro" id="IPR003398">
    <property type="entry name" value="PSII_PsbN"/>
</dbReference>
<dbReference type="PANTHER" id="PTHR35326">
    <property type="entry name" value="PROTEIN PSBN"/>
    <property type="match status" value="1"/>
</dbReference>
<dbReference type="PANTHER" id="PTHR35326:SF3">
    <property type="entry name" value="PROTEIN PSBN"/>
    <property type="match status" value="1"/>
</dbReference>
<dbReference type="Pfam" id="PF02468">
    <property type="entry name" value="PsbN"/>
    <property type="match status" value="1"/>
</dbReference>
<name>PSBN_EPHSI</name>